<sequence length="530" mass="59729">MSSLRPEEARKLATAASVSPLSNCQFCGVVISSIADEQKLEFTNKYKGSCTLLCSYDSQGVVLRVVSDDDRSHVLKEYMITADTDAAQMGRRSYAVSLDADNLVLRFGSEQDQQLFRKVVENVKHLRPKSVFSQRTEESSASQYFQFYGYLSQQQNMMQDYVRTSTYQRAILGNAVDFQDKIVLDVGAGSGILSFFAVQAGAAKVYAIEASNMAQYAQQLVESNNVQHKISVIPGKIEEIELPEKVDVIISEPMGYMLYNERMLETYLHARKWLKPQGKMYPTHGDLHIAPFSDESLYSEQYNKANFWYQSAFHGVDLTTLHKEGMKEYFRQPIVDTFDIRICMAKSVRHVCDFLNDKEDDLHLISIPLEFHILQTGICHGLAFWFDVEFSGSSQNVWLSTSPTAPLTHWYQVRCLLPMPIFIKQGQTLTGRVLLEANRRQSYDVTIDLHIEGTLISSSNTLDLKNPYFRYTGAPVQAPPGTSTQSPSEQYWTQVDTQGSRNSSSMLNGGLSVNGIGDGMDITHGLMHPH</sequence>
<protein>
    <recommendedName>
        <fullName evidence="3">Histone-arginine methyltransferase CARMER</fullName>
        <ecNumber evidence="3">2.1.1.319</ecNumber>
    </recommendedName>
</protein>
<reference evidence="6" key="1">
    <citation type="journal article" date="2007" name="Nature">
        <title>Evolution of genes and genomes on the Drosophila phylogeny.</title>
        <authorList>
            <consortium name="Drosophila 12 genomes consortium"/>
        </authorList>
    </citation>
    <scope>NUCLEOTIDE SEQUENCE [LARGE SCALE GENOMIC DNA]</scope>
    <source>
        <strain evidence="6">Rob3c / Tucson 14021-0248.25</strain>
    </source>
</reference>
<dbReference type="EC" id="2.1.1.319" evidence="3"/>
<dbReference type="EMBL" id="CH480815">
    <property type="protein sequence ID" value="EDW42792.1"/>
    <property type="molecule type" value="Genomic_DNA"/>
</dbReference>
<dbReference type="SMR" id="B4HJC0"/>
<dbReference type="STRING" id="7238.B4HJC0"/>
<dbReference type="EnsemblMetazoa" id="FBtr0209185">
    <property type="protein sequence ID" value="FBpp0207677"/>
    <property type="gene ID" value="FBgn0181055"/>
</dbReference>
<dbReference type="EnsemblMetazoa" id="XM_002031770.2">
    <property type="protein sequence ID" value="XP_002031806.1"/>
    <property type="gene ID" value="LOC6607017"/>
</dbReference>
<dbReference type="GeneID" id="6607017"/>
<dbReference type="KEGG" id="dse:6607017"/>
<dbReference type="CTD" id="420"/>
<dbReference type="HOGENOM" id="CLU_017375_0_1_1"/>
<dbReference type="OMA" id="GIGDGMD"/>
<dbReference type="OrthoDB" id="9776at7215"/>
<dbReference type="PhylomeDB" id="B4HJC0"/>
<dbReference type="Proteomes" id="UP000001292">
    <property type="component" value="Unassembled WGS sequence"/>
</dbReference>
<dbReference type="GO" id="GO:0005737">
    <property type="term" value="C:cytoplasm"/>
    <property type="evidence" value="ECO:0000250"/>
    <property type="project" value="UniProtKB"/>
</dbReference>
<dbReference type="GO" id="GO:0005829">
    <property type="term" value="C:cytosol"/>
    <property type="evidence" value="ECO:0007669"/>
    <property type="project" value="EnsemblMetazoa"/>
</dbReference>
<dbReference type="GO" id="GO:0035097">
    <property type="term" value="C:histone methyltransferase complex"/>
    <property type="evidence" value="ECO:0007669"/>
    <property type="project" value="EnsemblMetazoa"/>
</dbReference>
<dbReference type="GO" id="GO:0005634">
    <property type="term" value="C:nucleus"/>
    <property type="evidence" value="ECO:0000250"/>
    <property type="project" value="UniProtKB"/>
</dbReference>
<dbReference type="GO" id="GO:0035642">
    <property type="term" value="F:histone H3R17 methyltransferase activity"/>
    <property type="evidence" value="ECO:0000250"/>
    <property type="project" value="UniProtKB"/>
</dbReference>
<dbReference type="GO" id="GO:0070611">
    <property type="term" value="F:histone H3R2 methyltransferase activity"/>
    <property type="evidence" value="ECO:0000250"/>
    <property type="project" value="UniProtKB"/>
</dbReference>
<dbReference type="GO" id="GO:0140903">
    <property type="term" value="F:histone H3R26 methyltransferase activity"/>
    <property type="evidence" value="ECO:0000250"/>
    <property type="project" value="UniProtKB"/>
</dbReference>
<dbReference type="GO" id="GO:0035242">
    <property type="term" value="F:protein-arginine omega-N asymmetric methyltransferase activity"/>
    <property type="evidence" value="ECO:0000250"/>
    <property type="project" value="UniProtKB"/>
</dbReference>
<dbReference type="GO" id="GO:0035241">
    <property type="term" value="F:protein-arginine omega-N monomethyltransferase activity"/>
    <property type="evidence" value="ECO:0000250"/>
    <property type="project" value="UniProtKB"/>
</dbReference>
<dbReference type="GO" id="GO:0006338">
    <property type="term" value="P:chromatin remodeling"/>
    <property type="evidence" value="ECO:0000250"/>
    <property type="project" value="UniProtKB"/>
</dbReference>
<dbReference type="GO" id="GO:0019919">
    <property type="term" value="P:peptidyl-arginine methylation, to asymmetrical-dimethyl arginine"/>
    <property type="evidence" value="ECO:0000250"/>
    <property type="project" value="UniProtKB"/>
</dbReference>
<dbReference type="GO" id="GO:0120142">
    <property type="term" value="P:positive regulation of ecdysone receptor signaling pathway"/>
    <property type="evidence" value="ECO:0007669"/>
    <property type="project" value="EnsemblMetazoa"/>
</dbReference>
<dbReference type="GO" id="GO:0045944">
    <property type="term" value="P:positive regulation of transcription by RNA polymerase II"/>
    <property type="evidence" value="ECO:0007669"/>
    <property type="project" value="EnsemblMetazoa"/>
</dbReference>
<dbReference type="GO" id="GO:0006355">
    <property type="term" value="P:regulation of DNA-templated transcription"/>
    <property type="evidence" value="ECO:0000250"/>
    <property type="project" value="UniProtKB"/>
</dbReference>
<dbReference type="CDD" id="cd02440">
    <property type="entry name" value="AdoMet_MTases"/>
    <property type="match status" value="1"/>
</dbReference>
<dbReference type="FunFam" id="2.70.160.11:FF:000002">
    <property type="entry name" value="Probable histone-arginine methyltransferase CARM1"/>
    <property type="match status" value="1"/>
</dbReference>
<dbReference type="FunFam" id="3.40.50.150:FF:000031">
    <property type="entry name" value="Putative Histone-arginine methyltransferase CARM1"/>
    <property type="match status" value="1"/>
</dbReference>
<dbReference type="Gene3D" id="2.70.160.11">
    <property type="entry name" value="Hnrnp arginine n-methyltransferase1"/>
    <property type="match status" value="1"/>
</dbReference>
<dbReference type="Gene3D" id="2.30.29.30">
    <property type="entry name" value="Pleckstrin-homology domain (PH domain)/Phosphotyrosine-binding domain (PTB)"/>
    <property type="match status" value="1"/>
</dbReference>
<dbReference type="Gene3D" id="3.40.50.150">
    <property type="entry name" value="Vaccinia Virus protein VP39"/>
    <property type="match status" value="1"/>
</dbReference>
<dbReference type="InterPro" id="IPR025799">
    <property type="entry name" value="Arg_MeTrfase"/>
</dbReference>
<dbReference type="InterPro" id="IPR011993">
    <property type="entry name" value="PH-like_dom_sf"/>
</dbReference>
<dbReference type="InterPro" id="IPR055135">
    <property type="entry name" value="PRMT_dom"/>
</dbReference>
<dbReference type="InterPro" id="IPR029063">
    <property type="entry name" value="SAM-dependent_MTases_sf"/>
</dbReference>
<dbReference type="PANTHER" id="PTHR11006:SF10">
    <property type="entry name" value="HISTONE-ARGININE METHYLTRANSFERASE CARMER-RELATED"/>
    <property type="match status" value="1"/>
</dbReference>
<dbReference type="PANTHER" id="PTHR11006">
    <property type="entry name" value="PROTEIN ARGININE N-METHYLTRANSFERASE"/>
    <property type="match status" value="1"/>
</dbReference>
<dbReference type="Pfam" id="PF06325">
    <property type="entry name" value="PrmA"/>
    <property type="match status" value="1"/>
</dbReference>
<dbReference type="Pfam" id="PF22528">
    <property type="entry name" value="PRMT_C"/>
    <property type="match status" value="1"/>
</dbReference>
<dbReference type="SUPFAM" id="SSF53335">
    <property type="entry name" value="S-adenosyl-L-methionine-dependent methyltransferases"/>
    <property type="match status" value="1"/>
</dbReference>
<dbReference type="PROSITE" id="PS51678">
    <property type="entry name" value="SAM_MT_PRMT"/>
    <property type="match status" value="1"/>
</dbReference>
<evidence type="ECO:0000250" key="1"/>
<evidence type="ECO:0000250" key="2">
    <source>
        <dbReference type="UniProtKB" id="Q63009"/>
    </source>
</evidence>
<evidence type="ECO:0000250" key="3">
    <source>
        <dbReference type="UniProtKB" id="Q7Q2B7"/>
    </source>
</evidence>
<evidence type="ECO:0000250" key="4">
    <source>
        <dbReference type="UniProtKB" id="Q9VH48"/>
    </source>
</evidence>
<evidence type="ECO:0000255" key="5">
    <source>
        <dbReference type="PROSITE-ProRule" id="PRU01015"/>
    </source>
</evidence>
<evidence type="ECO:0000312" key="6">
    <source>
        <dbReference type="EMBL" id="EDW42792.1"/>
    </source>
</evidence>
<organism>
    <name type="scientific">Drosophila sechellia</name>
    <name type="common">Fruit fly</name>
    <dbReference type="NCBI Taxonomy" id="7238"/>
    <lineage>
        <taxon>Eukaryota</taxon>
        <taxon>Metazoa</taxon>
        <taxon>Ecdysozoa</taxon>
        <taxon>Arthropoda</taxon>
        <taxon>Hexapoda</taxon>
        <taxon>Insecta</taxon>
        <taxon>Pterygota</taxon>
        <taxon>Neoptera</taxon>
        <taxon>Endopterygota</taxon>
        <taxon>Diptera</taxon>
        <taxon>Brachycera</taxon>
        <taxon>Muscomorpha</taxon>
        <taxon>Ephydroidea</taxon>
        <taxon>Drosophilidae</taxon>
        <taxon>Drosophila</taxon>
        <taxon>Sophophora</taxon>
    </lineage>
</organism>
<feature type="chain" id="PRO_0000382227" description="Histone-arginine methyltransferase CARMER">
    <location>
        <begin position="1"/>
        <end position="530"/>
    </location>
</feature>
<feature type="domain" description="SAM-dependent MTase PRMT-type" evidence="5">
    <location>
        <begin position="141"/>
        <end position="450"/>
    </location>
</feature>
<feature type="binding site" evidence="2">
    <location>
        <position position="154"/>
    </location>
    <ligand>
        <name>S-adenosyl-L-methionine</name>
        <dbReference type="ChEBI" id="CHEBI:59789"/>
    </ligand>
</feature>
<feature type="binding site" evidence="2">
    <location>
        <position position="163"/>
    </location>
    <ligand>
        <name>S-adenosyl-L-methionine</name>
        <dbReference type="ChEBI" id="CHEBI:59789"/>
    </ligand>
</feature>
<feature type="binding site" evidence="2">
    <location>
        <position position="187"/>
    </location>
    <ligand>
        <name>S-adenosyl-L-methionine</name>
        <dbReference type="ChEBI" id="CHEBI:59789"/>
    </ligand>
</feature>
<feature type="binding site" evidence="2">
    <location>
        <position position="209"/>
    </location>
    <ligand>
        <name>S-adenosyl-L-methionine</name>
        <dbReference type="ChEBI" id="CHEBI:59789"/>
    </ligand>
</feature>
<feature type="binding site" evidence="2">
    <location>
        <position position="238"/>
    </location>
    <ligand>
        <name>S-adenosyl-L-methionine</name>
        <dbReference type="ChEBI" id="CHEBI:59789"/>
    </ligand>
</feature>
<feature type="binding site" evidence="1">
    <location>
        <position position="266"/>
    </location>
    <ligand>
        <name>S-adenosyl-L-methionine</name>
        <dbReference type="ChEBI" id="CHEBI:59789"/>
    </ligand>
</feature>
<feature type="modified residue" description="Asymmetric dimethylarginine; by autocatalysis" evidence="3">
    <location>
        <position position="501"/>
    </location>
</feature>
<proteinExistence type="inferred from homology"/>
<keyword id="KW-0156">Chromatin regulator</keyword>
<keyword id="KW-0963">Cytoplasm</keyword>
<keyword id="KW-0488">Methylation</keyword>
<keyword id="KW-0489">Methyltransferase</keyword>
<keyword id="KW-0539">Nucleus</keyword>
<keyword id="KW-1185">Reference proteome</keyword>
<keyword id="KW-0949">S-adenosyl-L-methionine</keyword>
<keyword id="KW-0804">Transcription</keyword>
<keyword id="KW-0805">Transcription regulation</keyword>
<keyword id="KW-0808">Transferase</keyword>
<accession>B4HJC0</accession>
<comment type="function">
    <text evidence="3">Methylates (mono- and asymmetric dimethylation) the guanidino nitrogens of arginyl residues in proteins. May methylate histone H3 at 'Arg-17' and activate transcription via chromatin remodeling (By similarity).</text>
</comment>
<comment type="catalytic activity">
    <reaction evidence="3">
        <text>L-arginyl-[protein] + 2 S-adenosyl-L-methionine = N(omega),N(omega)-dimethyl-L-arginyl-[protein] + 2 S-adenosyl-L-homocysteine + 2 H(+)</text>
        <dbReference type="Rhea" id="RHEA:48096"/>
        <dbReference type="Rhea" id="RHEA-COMP:10532"/>
        <dbReference type="Rhea" id="RHEA-COMP:11991"/>
        <dbReference type="ChEBI" id="CHEBI:15378"/>
        <dbReference type="ChEBI" id="CHEBI:29965"/>
        <dbReference type="ChEBI" id="CHEBI:57856"/>
        <dbReference type="ChEBI" id="CHEBI:59789"/>
        <dbReference type="ChEBI" id="CHEBI:61897"/>
        <dbReference type="EC" id="2.1.1.319"/>
    </reaction>
</comment>
<comment type="subunit">
    <text evidence="1">Homodimer.</text>
</comment>
<comment type="subcellular location">
    <subcellularLocation>
        <location evidence="4">Cytoplasm</location>
    </subcellularLocation>
    <subcellularLocation>
        <location evidence="4">Nucleus</location>
    </subcellularLocation>
</comment>
<comment type="PTM">
    <text evidence="1">The dimethylated protein is the major form.</text>
</comment>
<comment type="similarity">
    <text evidence="5">Belongs to the class I-like SAM-binding methyltransferase superfamily. Protein arginine N-methyltransferase family.</text>
</comment>
<name>CARM1_DROSE</name>
<gene>
    <name type="primary">Art4</name>
    <name type="ORF">GM26200</name>
</gene>